<accession>Q8K9U5</accession>
<gene>
    <name evidence="1" type="primary">dksA</name>
    <name type="ordered locus">BUsg_192</name>
</gene>
<name>DKSA_BUCAP</name>
<feature type="chain" id="PRO_0000187543" description="RNA polymerase-binding transcription factor DksA">
    <location>
        <begin position="1"/>
        <end position="151"/>
    </location>
</feature>
<feature type="zinc finger region" description="dksA C4-type" evidence="1">
    <location>
        <begin position="114"/>
        <end position="138"/>
    </location>
</feature>
<feature type="binding site" evidence="1">
    <location>
        <position position="114"/>
    </location>
    <ligand>
        <name>Zn(2+)</name>
        <dbReference type="ChEBI" id="CHEBI:29105"/>
    </ligand>
</feature>
<feature type="binding site" evidence="1">
    <location>
        <position position="117"/>
    </location>
    <ligand>
        <name>Zn(2+)</name>
        <dbReference type="ChEBI" id="CHEBI:29105"/>
    </ligand>
</feature>
<feature type="binding site" evidence="1">
    <location>
        <position position="135"/>
    </location>
    <ligand>
        <name>Zn(2+)</name>
        <dbReference type="ChEBI" id="CHEBI:29105"/>
    </ligand>
</feature>
<feature type="binding site" evidence="1">
    <location>
        <position position="138"/>
    </location>
    <ligand>
        <name>Zn(2+)</name>
        <dbReference type="ChEBI" id="CHEBI:29105"/>
    </ligand>
</feature>
<reference key="1">
    <citation type="journal article" date="2002" name="Science">
        <title>50 million years of genomic stasis in endosymbiotic bacteria.</title>
        <authorList>
            <person name="Tamas I."/>
            <person name="Klasson L."/>
            <person name="Canbaeck B."/>
            <person name="Naeslund A.K."/>
            <person name="Eriksson A.-S."/>
            <person name="Wernegreen J.J."/>
            <person name="Sandstroem J.P."/>
            <person name="Moran N.A."/>
            <person name="Andersson S.G.E."/>
        </authorList>
    </citation>
    <scope>NUCLEOTIDE SEQUENCE [LARGE SCALE GENOMIC DNA]</scope>
    <source>
        <strain>Sg</strain>
    </source>
</reference>
<dbReference type="EMBL" id="AE013218">
    <property type="protein sequence ID" value="AAM67757.1"/>
    <property type="molecule type" value="Genomic_DNA"/>
</dbReference>
<dbReference type="RefSeq" id="WP_011053724.1">
    <property type="nucleotide sequence ID" value="NC_004061.1"/>
</dbReference>
<dbReference type="SMR" id="Q8K9U5"/>
<dbReference type="STRING" id="198804.BUsg_192"/>
<dbReference type="GeneID" id="93003660"/>
<dbReference type="KEGG" id="bas:BUsg_192"/>
<dbReference type="eggNOG" id="COG1734">
    <property type="taxonomic scope" value="Bacteria"/>
</dbReference>
<dbReference type="HOGENOM" id="CLU_043144_2_0_6"/>
<dbReference type="Proteomes" id="UP000000416">
    <property type="component" value="Chromosome"/>
</dbReference>
<dbReference type="GO" id="GO:0005737">
    <property type="term" value="C:cytoplasm"/>
    <property type="evidence" value="ECO:0007669"/>
    <property type="project" value="UniProtKB-SubCell"/>
</dbReference>
<dbReference type="GO" id="GO:0008270">
    <property type="term" value="F:zinc ion binding"/>
    <property type="evidence" value="ECO:0007669"/>
    <property type="project" value="UniProtKB-UniRule"/>
</dbReference>
<dbReference type="GO" id="GO:0010468">
    <property type="term" value="P:regulation of gene expression"/>
    <property type="evidence" value="ECO:0007669"/>
    <property type="project" value="UniProtKB-UniRule"/>
</dbReference>
<dbReference type="FunFam" id="1.20.120.910:FF:000001">
    <property type="entry name" value="RNA polymerase-binding transcription factor DksA"/>
    <property type="match status" value="1"/>
</dbReference>
<dbReference type="Gene3D" id="1.20.120.910">
    <property type="entry name" value="DksA, coiled-coil domain"/>
    <property type="match status" value="1"/>
</dbReference>
<dbReference type="HAMAP" id="MF_00926">
    <property type="entry name" value="DksA"/>
    <property type="match status" value="1"/>
</dbReference>
<dbReference type="InterPro" id="IPR048489">
    <property type="entry name" value="DksA_N"/>
</dbReference>
<dbReference type="InterPro" id="IPR012784">
    <property type="entry name" value="DksA_RNA_pol-bd"/>
</dbReference>
<dbReference type="InterPro" id="IPR037187">
    <property type="entry name" value="DnaK_N"/>
</dbReference>
<dbReference type="InterPro" id="IPR000962">
    <property type="entry name" value="Znf_DskA_TraR"/>
</dbReference>
<dbReference type="InterPro" id="IPR020458">
    <property type="entry name" value="Znf_DskA_TraR_CS"/>
</dbReference>
<dbReference type="NCBIfam" id="TIGR02420">
    <property type="entry name" value="dksA"/>
    <property type="match status" value="1"/>
</dbReference>
<dbReference type="PANTHER" id="PTHR33823:SF2">
    <property type="entry name" value="RNA POLYMERASE-BINDING TRANSCRIPTION FACTOR DKSA"/>
    <property type="match status" value="1"/>
</dbReference>
<dbReference type="PANTHER" id="PTHR33823">
    <property type="entry name" value="RNA POLYMERASE-BINDING TRANSCRIPTION FACTOR DKSA-RELATED"/>
    <property type="match status" value="1"/>
</dbReference>
<dbReference type="Pfam" id="PF21157">
    <property type="entry name" value="DksA_N"/>
    <property type="match status" value="1"/>
</dbReference>
<dbReference type="Pfam" id="PF01258">
    <property type="entry name" value="zf-dskA_traR"/>
    <property type="match status" value="1"/>
</dbReference>
<dbReference type="SUPFAM" id="SSF109635">
    <property type="entry name" value="DnaK suppressor protein DksA, alpha-hairpin domain"/>
    <property type="match status" value="1"/>
</dbReference>
<dbReference type="SUPFAM" id="SSF57716">
    <property type="entry name" value="Glucocorticoid receptor-like (DNA-binding domain)"/>
    <property type="match status" value="1"/>
</dbReference>
<dbReference type="PROSITE" id="PS01102">
    <property type="entry name" value="ZF_DKSA_1"/>
    <property type="match status" value="1"/>
</dbReference>
<dbReference type="PROSITE" id="PS51128">
    <property type="entry name" value="ZF_DKSA_2"/>
    <property type="match status" value="1"/>
</dbReference>
<organism>
    <name type="scientific">Buchnera aphidicola subsp. Schizaphis graminum (strain Sg)</name>
    <dbReference type="NCBI Taxonomy" id="198804"/>
    <lineage>
        <taxon>Bacteria</taxon>
        <taxon>Pseudomonadati</taxon>
        <taxon>Pseudomonadota</taxon>
        <taxon>Gammaproteobacteria</taxon>
        <taxon>Enterobacterales</taxon>
        <taxon>Erwiniaceae</taxon>
        <taxon>Buchnera</taxon>
    </lineage>
</organism>
<keyword id="KW-0963">Cytoplasm</keyword>
<keyword id="KW-0479">Metal-binding</keyword>
<keyword id="KW-0862">Zinc</keyword>
<keyword id="KW-0863">Zinc-finger</keyword>
<protein>
    <recommendedName>
        <fullName evidence="1">RNA polymerase-binding transcription factor DksA</fullName>
    </recommendedName>
</protein>
<evidence type="ECO:0000255" key="1">
    <source>
        <dbReference type="HAMAP-Rule" id="MF_00926"/>
    </source>
</evidence>
<comment type="function">
    <text evidence="1">Transcription factor that acts by binding directly to the RNA polymerase (RNAP). Required for negative regulation of rRNA expression and positive regulation of several amino acid biosynthesis promoters. Also required for regulation of fis expression.</text>
</comment>
<comment type="subunit">
    <text evidence="1">Interacts directly with the RNA polymerase.</text>
</comment>
<comment type="subcellular location">
    <subcellularLocation>
        <location evidence="1">Cytoplasm</location>
    </subcellularLocation>
</comment>
<comment type="similarity">
    <text evidence="1">Belongs to the DksA family.</text>
</comment>
<proteinExistence type="inferred from homology"/>
<sequence>MEKEQNKKTSSLNVLAIAGLQPYQKKTDEEYMNEKQMLHFKKILETWKNQLTIEINHTLLYIQDKSTNFPDPIDRAAQEEEFSLELRNRDRSRKLIKKIQETLKKIKDKDFGYCNSCAVEIGIRRLEARPTANLCIDCKTLAEIREKQMAG</sequence>